<dbReference type="EC" id="2.6.1.-" evidence="5"/>
<dbReference type="EMBL" id="BA000050">
    <property type="protein sequence ID" value="BAE56596.1"/>
    <property type="molecule type" value="Genomic_DNA"/>
</dbReference>
<dbReference type="RefSeq" id="XP_001818598.1">
    <property type="nucleotide sequence ID" value="XM_001818546.1"/>
</dbReference>
<dbReference type="SMR" id="Q2UPB9"/>
<dbReference type="STRING" id="510516.Q2UPB9"/>
<dbReference type="EnsemblFungi" id="BAE56596">
    <property type="protein sequence ID" value="BAE56596"/>
    <property type="gene ID" value="AO090001000033"/>
</dbReference>
<dbReference type="GeneID" id="5990569"/>
<dbReference type="KEGG" id="aor:AO090001000033"/>
<dbReference type="VEuPathDB" id="FungiDB:AO090001000033"/>
<dbReference type="HOGENOM" id="CLU_017584_1_2_1"/>
<dbReference type="OMA" id="LITFAMT"/>
<dbReference type="OrthoDB" id="56670at5052"/>
<dbReference type="Proteomes" id="UP000006564">
    <property type="component" value="Chromosome 2"/>
</dbReference>
<dbReference type="GO" id="GO:0030170">
    <property type="term" value="F:pyridoxal phosphate binding"/>
    <property type="evidence" value="ECO:0007669"/>
    <property type="project" value="InterPro"/>
</dbReference>
<dbReference type="GO" id="GO:0008483">
    <property type="term" value="F:transaminase activity"/>
    <property type="evidence" value="ECO:0007669"/>
    <property type="project" value="UniProtKB-KW"/>
</dbReference>
<dbReference type="GO" id="GO:0006520">
    <property type="term" value="P:amino acid metabolic process"/>
    <property type="evidence" value="ECO:0007669"/>
    <property type="project" value="TreeGrafter"/>
</dbReference>
<dbReference type="GO" id="GO:0009058">
    <property type="term" value="P:biosynthetic process"/>
    <property type="evidence" value="ECO:0007669"/>
    <property type="project" value="InterPro"/>
</dbReference>
<dbReference type="CDD" id="cd00609">
    <property type="entry name" value="AAT_like"/>
    <property type="match status" value="1"/>
</dbReference>
<dbReference type="Gene3D" id="3.90.1150.10">
    <property type="entry name" value="Aspartate Aminotransferase, domain 1"/>
    <property type="match status" value="1"/>
</dbReference>
<dbReference type="Gene3D" id="3.40.640.10">
    <property type="entry name" value="Type I PLP-dependent aspartate aminotransferase-like (Major domain)"/>
    <property type="match status" value="1"/>
</dbReference>
<dbReference type="InterPro" id="IPR004839">
    <property type="entry name" value="Aminotransferase_I/II_large"/>
</dbReference>
<dbReference type="InterPro" id="IPR050478">
    <property type="entry name" value="Ethylene_sulfur-biosynth"/>
</dbReference>
<dbReference type="InterPro" id="IPR015424">
    <property type="entry name" value="PyrdxlP-dep_Trfase"/>
</dbReference>
<dbReference type="InterPro" id="IPR015421">
    <property type="entry name" value="PyrdxlP-dep_Trfase_major"/>
</dbReference>
<dbReference type="InterPro" id="IPR015422">
    <property type="entry name" value="PyrdxlP-dep_Trfase_small"/>
</dbReference>
<dbReference type="PANTHER" id="PTHR43795:SF32">
    <property type="entry name" value="AMINOTRANSFERASE GLII-RELATED"/>
    <property type="match status" value="1"/>
</dbReference>
<dbReference type="PANTHER" id="PTHR43795">
    <property type="entry name" value="BIFUNCTIONAL ASPARTATE AMINOTRANSFERASE AND GLUTAMATE/ASPARTATE-PREPHENATE AMINOTRANSFERASE-RELATED"/>
    <property type="match status" value="1"/>
</dbReference>
<dbReference type="Pfam" id="PF00155">
    <property type="entry name" value="Aminotran_1_2"/>
    <property type="match status" value="1"/>
</dbReference>
<dbReference type="PRINTS" id="PR00753">
    <property type="entry name" value="ACCSYNTHASE"/>
</dbReference>
<dbReference type="SUPFAM" id="SSF53383">
    <property type="entry name" value="PLP-dependent transferases"/>
    <property type="match status" value="1"/>
</dbReference>
<gene>
    <name evidence="4" type="primary">aclI</name>
    <name type="ORF">AO090001000033</name>
</gene>
<reference key="1">
    <citation type="journal article" date="2005" name="Nature">
        <title>Genome sequencing and analysis of Aspergillus oryzae.</title>
        <authorList>
            <person name="Machida M."/>
            <person name="Asai K."/>
            <person name="Sano M."/>
            <person name="Tanaka T."/>
            <person name="Kumagai T."/>
            <person name="Terai G."/>
            <person name="Kusumoto K."/>
            <person name="Arima T."/>
            <person name="Akita O."/>
            <person name="Kashiwagi Y."/>
            <person name="Abe K."/>
            <person name="Gomi K."/>
            <person name="Horiuchi H."/>
            <person name="Kitamoto K."/>
            <person name="Kobayashi T."/>
            <person name="Takeuchi M."/>
            <person name="Denning D.W."/>
            <person name="Galagan J.E."/>
            <person name="Nierman W.C."/>
            <person name="Yu J."/>
            <person name="Archer D.B."/>
            <person name="Bennett J.W."/>
            <person name="Bhatnagar D."/>
            <person name="Cleveland T.E."/>
            <person name="Fedorova N.D."/>
            <person name="Gotoh O."/>
            <person name="Horikawa H."/>
            <person name="Hosoyama A."/>
            <person name="Ichinomiya M."/>
            <person name="Igarashi R."/>
            <person name="Iwashita K."/>
            <person name="Juvvadi P.R."/>
            <person name="Kato M."/>
            <person name="Kato Y."/>
            <person name="Kin T."/>
            <person name="Kokubun A."/>
            <person name="Maeda H."/>
            <person name="Maeyama N."/>
            <person name="Maruyama J."/>
            <person name="Nagasaki H."/>
            <person name="Nakajima T."/>
            <person name="Oda K."/>
            <person name="Okada K."/>
            <person name="Paulsen I."/>
            <person name="Sakamoto K."/>
            <person name="Sawano T."/>
            <person name="Takahashi M."/>
            <person name="Takase K."/>
            <person name="Terabayashi Y."/>
            <person name="Wortman J.R."/>
            <person name="Yamada O."/>
            <person name="Yamagata Y."/>
            <person name="Anazawa H."/>
            <person name="Hata Y."/>
            <person name="Koide Y."/>
            <person name="Komori T."/>
            <person name="Koyama Y."/>
            <person name="Minetoki T."/>
            <person name="Suharnan S."/>
            <person name="Tanaka A."/>
            <person name="Isono K."/>
            <person name="Kuhara S."/>
            <person name="Ogasawara N."/>
            <person name="Kikuchi H."/>
        </authorList>
    </citation>
    <scope>NUCLEOTIDE SEQUENCE [LARGE SCALE GENOMIC DNA]</scope>
    <source>
        <strain>ATCC 42149 / RIB 40</strain>
    </source>
</reference>
<reference key="2">
    <citation type="journal article" date="2014" name="Angew. Chem. Int. Ed.">
        <title>Biosynthesis of the halogenated mycotoxin aspirochlorine in koji mold involves a cryptic amino acid conversion.</title>
        <authorList>
            <person name="Chankhamjon P."/>
            <person name="Boettger-Schmidt D."/>
            <person name="Scherlach K."/>
            <person name="Urbansky B."/>
            <person name="Lackner G."/>
            <person name="Kalb D."/>
            <person name="Dahse H.M."/>
            <person name="Hoffmeister D."/>
            <person name="Hertweck C."/>
        </authorList>
    </citation>
    <scope>FUNCTION</scope>
    <scope>PATHWAY</scope>
</reference>
<sequence>MASAGAGLSKRGASNVDAIMPGIRAALLERTRPTVPRIDLSTAENWLLRNEVIELTKDAIRDGLKPHHLSYPNEFAGDADLIKALAAFVNEYFHPHIPVEPDHIATAPGAATCLNTFLYNLCEPGEGILVPAPFWNGFDWLFTARSSAVPVMVHVERSADTLTAKLIPALEKAYEESKIPIRGLLLTNPQNPYGQCYPRSVMEDCIRFCHSKGIHYISDEVYALSNFENPELPDAPPFVSALQIDVKGIGCDLSRVHTFWSTSKDFGSSGFRVGCSITQANEAMHVALALASNTESSSLSAVASTALLTSPRLPELLQLNAQRLQEAYCLMTNFLKKHQIEYIPANSAPFLFARVAPQAQTWEDEKAVIAQLKEAGVNVSGGKAYHVNEDQKGWARLTFALETSRAEEAIKRMETVLGKQ</sequence>
<keyword id="KW-0032">Aminotransferase</keyword>
<keyword id="KW-0663">Pyridoxal phosphate</keyword>
<keyword id="KW-1185">Reference proteome</keyword>
<keyword id="KW-0808">Transferase</keyword>
<feature type="chain" id="PRO_0000441202" description="Probable aminotransferase aclI">
    <location>
        <begin position="1"/>
        <end position="420"/>
    </location>
</feature>
<feature type="modified residue" description="N6-(pyridoxal phosphate)lysine" evidence="1">
    <location>
        <position position="264"/>
    </location>
</feature>
<accession>Q2UPB9</accession>
<protein>
    <recommendedName>
        <fullName evidence="4">Probable aminotransferase aclI</fullName>
        <ecNumber evidence="5">2.6.1.-</ecNumber>
    </recommendedName>
    <alternativeName>
        <fullName evidence="4">Aspirochlorine biosynthesis protein I</fullName>
    </alternativeName>
</protein>
<organism>
    <name type="scientific">Aspergillus oryzae (strain ATCC 42149 / RIB 40)</name>
    <name type="common">Yellow koji mold</name>
    <dbReference type="NCBI Taxonomy" id="510516"/>
    <lineage>
        <taxon>Eukaryota</taxon>
        <taxon>Fungi</taxon>
        <taxon>Dikarya</taxon>
        <taxon>Ascomycota</taxon>
        <taxon>Pezizomycotina</taxon>
        <taxon>Eurotiomycetes</taxon>
        <taxon>Eurotiomycetidae</taxon>
        <taxon>Eurotiales</taxon>
        <taxon>Aspergillaceae</taxon>
        <taxon>Aspergillus</taxon>
        <taxon>Aspergillus subgen. Circumdati</taxon>
    </lineage>
</organism>
<evidence type="ECO:0000250" key="1">
    <source>
        <dbReference type="UniProtKB" id="P00509"/>
    </source>
</evidence>
<evidence type="ECO:0000255" key="2"/>
<evidence type="ECO:0000269" key="3">
    <source>
    </source>
</evidence>
<evidence type="ECO:0000303" key="4">
    <source>
    </source>
</evidence>
<evidence type="ECO:0000305" key="5">
    <source>
    </source>
</evidence>
<name>ACLI_ASPOR</name>
<comment type="function">
    <text evidence="3">Probable aminotransferase; part of the gene cluster that mediates the biosynthesis of aspirochlorine (or antibiotic A30641), an unusual halogenated spiro compound with distinctive antifungal properties due to selective inhibition of protein biosynthesis, and which is also active against bacteria, viruses, and murine tumor cells (PubMed:25302411). The non-ribosomal peptide synthetase (NRPS) aclP is responsible the formation of the diketopiperazine (DKP) core from the condensation of 2 phenylalanine residues (PubMed:25302411). One Phe residue is tailored into chlorotyrosine by hydroxylation and chlorination, whereas the second Phe undergoes an unprecedented C-C bond cleavage to be converted into glycine (PubMed:25302411). After formation of the DKP, sulfur is incorporated into the DKP by conjugation with glutathione by aclG, followed by its stepwise degradation to the thiol by aclI, aclJ and aclK, and the dithiol oxidation by aclT (PubMed:25302411). In addition, oxygenases (aclB, aclC, aclL and aclO) and O-methyltransferases (aclM and aclU) act as tailoring enzymes to produce the intermediate dechloroaspirochlorine (PubMed:25302411). Ultimately, chlorination of dechloroaspirochlorine by the halogenase aclH is the last step in the aspirochlorine pathway (PubMed:25302411).</text>
</comment>
<comment type="cofactor">
    <cofactor evidence="1">
        <name>pyridoxal 5'-phosphate</name>
        <dbReference type="ChEBI" id="CHEBI:597326"/>
    </cofactor>
</comment>
<comment type="pathway">
    <text evidence="5">Mycotoxin biosynthesis.</text>
</comment>
<comment type="similarity">
    <text evidence="2">Belongs to the class-I pyridoxal-phosphate-dependent aminotransferase family.</text>
</comment>
<proteinExistence type="inferred from homology"/>